<evidence type="ECO:0000250" key="1"/>
<evidence type="ECO:0000305" key="2"/>
<comment type="function">
    <text>Regulates arginine biosynthesis genes and activates arginine deiminase pathway genes.</text>
</comment>
<comment type="pathway">
    <text>Amino-acid biosynthesis; L-arginine biosynthesis [regulation].</text>
</comment>
<comment type="pathway">
    <text>Amino-acid degradation; L-arginine degradation via ADI pathway.</text>
</comment>
<comment type="subcellular location">
    <subcellularLocation>
        <location evidence="1">Cytoplasm</location>
    </subcellularLocation>
</comment>
<comment type="similarity">
    <text evidence="2">Belongs to the ArgR family.</text>
</comment>
<organism>
    <name type="scientific">Bacillus licheniformis (strain ATCC 14580 / DSM 13 / JCM 2505 / CCUG 7422 / NBRC 12200 / NCIMB 9375 / NCTC 10341 / NRRL NRS-1264 / Gibson 46)</name>
    <dbReference type="NCBI Taxonomy" id="279010"/>
    <lineage>
        <taxon>Bacteria</taxon>
        <taxon>Bacillati</taxon>
        <taxon>Bacillota</taxon>
        <taxon>Bacilli</taxon>
        <taxon>Bacillales</taxon>
        <taxon>Bacillaceae</taxon>
        <taxon>Bacillus</taxon>
    </lineage>
</organism>
<proteinExistence type="inferred from homology"/>
<sequence length="149" mass="16832">MNKGQRHIKIREIITANEIETQDELVDILKKDGYNVTQATVSRDIKELHLVKVPTNNGSYKYSLPADQRFNPLSKLKRSLMDAFVKIDSASHLIVLKTMPGNAQAIGALMDNLDWEEIMGTICGDDTILIICRTHDDTKVVQKKILELL</sequence>
<gene>
    <name type="primary">argR</name>
    <name type="synonym">ahrC</name>
    <name type="ordered locus">BLi02596</name>
    <name type="ordered locus">BL01521</name>
</gene>
<accession>O86130</accession>
<accession>Q65HJ4</accession>
<reference key="1">
    <citation type="journal article" date="1998" name="J. Bacteriol.">
        <title>The arcABDC gene cluster, encoding the arginine deiminase pathway of Bacillus licheniformis, and its activation by the arginine repressor argR.</title>
        <authorList>
            <person name="Maghnouj A."/>
            <person name="de Sousa Cabral T.F."/>
            <person name="Stalon V."/>
            <person name="Vander Wauven C."/>
        </authorList>
    </citation>
    <scope>NUCLEOTIDE SEQUENCE [GENOMIC DNA]</scope>
</reference>
<reference key="2">
    <citation type="journal article" date="2004" name="J. Mol. Microbiol. Biotechnol.">
        <title>The complete genome sequence of Bacillus licheniformis DSM13, an organism with great industrial potential.</title>
        <authorList>
            <person name="Veith B."/>
            <person name="Herzberg C."/>
            <person name="Steckel S."/>
            <person name="Feesche J."/>
            <person name="Maurer K.H."/>
            <person name="Ehrenreich P."/>
            <person name="Baeumer S."/>
            <person name="Henne A."/>
            <person name="Liesegang H."/>
            <person name="Merkl R."/>
            <person name="Ehrenreich A."/>
            <person name="Gottschalk G."/>
        </authorList>
    </citation>
    <scope>NUCLEOTIDE SEQUENCE [LARGE SCALE GENOMIC DNA]</scope>
    <source>
        <strain>ATCC 14580 / DSM 13 / JCM 2505 / CCUG 7422 / NBRC 12200 / NCIMB 9375 / NCTC 10341 / NRRL NRS-1264 / Gibson 46</strain>
    </source>
</reference>
<reference key="3">
    <citation type="journal article" date="2004" name="Genome Biol.">
        <title>Complete genome sequence of the industrial bacterium Bacillus licheniformis and comparisons with closely related Bacillus species.</title>
        <authorList>
            <person name="Rey M.W."/>
            <person name="Ramaiya P."/>
            <person name="Nelson B.A."/>
            <person name="Brody-Karpin S.D."/>
            <person name="Zaretsky E.J."/>
            <person name="Tang M."/>
            <person name="Lopez de Leon A."/>
            <person name="Xiang H."/>
            <person name="Gusti V."/>
            <person name="Clausen I.G."/>
            <person name="Olsen P.B."/>
            <person name="Rasmussen M.D."/>
            <person name="Andersen J.T."/>
            <person name="Joergensen P.L."/>
            <person name="Larsen T.S."/>
            <person name="Sorokin A."/>
            <person name="Bolotin A."/>
            <person name="Lapidus A."/>
            <person name="Galleron N."/>
            <person name="Ehrlich S.D."/>
            <person name="Berka R.M."/>
        </authorList>
    </citation>
    <scope>NUCLEOTIDE SEQUENCE [LARGE SCALE GENOMIC DNA]</scope>
    <source>
        <strain>ATCC 14580 / DSM 13 / JCM 2505 / CCUG 7422 / NBRC 12200 / NCIMB 9375 / NCTC 10341 / NRRL NRS-1264 / Gibson 46</strain>
    </source>
</reference>
<feature type="chain" id="PRO_0000205069" description="Arginine repressor">
    <location>
        <begin position="1"/>
        <end position="149"/>
    </location>
</feature>
<protein>
    <recommendedName>
        <fullName>Arginine repressor</fullName>
    </recommendedName>
</protein>
<dbReference type="EMBL" id="Y17553">
    <property type="protein sequence ID" value="CAA76776.1"/>
    <property type="molecule type" value="Genomic_DNA"/>
</dbReference>
<dbReference type="EMBL" id="AE017333">
    <property type="protein sequence ID" value="AAU41470.1"/>
    <property type="molecule type" value="Genomic_DNA"/>
</dbReference>
<dbReference type="EMBL" id="CP000002">
    <property type="protein sequence ID" value="AAU24111.1"/>
    <property type="molecule type" value="Genomic_DNA"/>
</dbReference>
<dbReference type="RefSeq" id="WP_003183369.1">
    <property type="nucleotide sequence ID" value="NC_006322.1"/>
</dbReference>
<dbReference type="SMR" id="O86130"/>
<dbReference type="STRING" id="279010.BL01521"/>
<dbReference type="GeneID" id="92860809"/>
<dbReference type="KEGG" id="bld:BLi02596"/>
<dbReference type="KEGG" id="bli:BL01521"/>
<dbReference type="eggNOG" id="COG1438">
    <property type="taxonomic scope" value="Bacteria"/>
</dbReference>
<dbReference type="HOGENOM" id="CLU_097103_3_0_9"/>
<dbReference type="UniPathway" id="UPA00068"/>
<dbReference type="UniPathway" id="UPA00254"/>
<dbReference type="Proteomes" id="UP000000606">
    <property type="component" value="Chromosome"/>
</dbReference>
<dbReference type="GO" id="GO:0005737">
    <property type="term" value="C:cytoplasm"/>
    <property type="evidence" value="ECO:0007669"/>
    <property type="project" value="UniProtKB-SubCell"/>
</dbReference>
<dbReference type="GO" id="GO:0034618">
    <property type="term" value="F:arginine binding"/>
    <property type="evidence" value="ECO:0007669"/>
    <property type="project" value="InterPro"/>
</dbReference>
<dbReference type="GO" id="GO:0003677">
    <property type="term" value="F:DNA binding"/>
    <property type="evidence" value="ECO:0007669"/>
    <property type="project" value="UniProtKB-KW"/>
</dbReference>
<dbReference type="GO" id="GO:0003700">
    <property type="term" value="F:DNA-binding transcription factor activity"/>
    <property type="evidence" value="ECO:0007669"/>
    <property type="project" value="UniProtKB-UniRule"/>
</dbReference>
<dbReference type="GO" id="GO:0019547">
    <property type="term" value="P:arginine catabolic process to ornithine"/>
    <property type="evidence" value="ECO:0007669"/>
    <property type="project" value="UniProtKB-UniPathway"/>
</dbReference>
<dbReference type="GO" id="GO:0006526">
    <property type="term" value="P:L-arginine biosynthetic process"/>
    <property type="evidence" value="ECO:0007669"/>
    <property type="project" value="UniProtKB-UniPathway"/>
</dbReference>
<dbReference type="GO" id="GO:0051259">
    <property type="term" value="P:protein complex oligomerization"/>
    <property type="evidence" value="ECO:0007669"/>
    <property type="project" value="InterPro"/>
</dbReference>
<dbReference type="GO" id="GO:1900079">
    <property type="term" value="P:regulation of arginine biosynthetic process"/>
    <property type="evidence" value="ECO:0007669"/>
    <property type="project" value="UniProtKB-UniRule"/>
</dbReference>
<dbReference type="FunFam" id="3.30.1360.40:FF:000006">
    <property type="entry name" value="Arginine repressor"/>
    <property type="match status" value="1"/>
</dbReference>
<dbReference type="Gene3D" id="3.30.1360.40">
    <property type="match status" value="1"/>
</dbReference>
<dbReference type="Gene3D" id="1.10.10.10">
    <property type="entry name" value="Winged helix-like DNA-binding domain superfamily/Winged helix DNA-binding domain"/>
    <property type="match status" value="1"/>
</dbReference>
<dbReference type="HAMAP" id="MF_00173">
    <property type="entry name" value="Arg_repressor"/>
    <property type="match status" value="1"/>
</dbReference>
<dbReference type="InterPro" id="IPR001669">
    <property type="entry name" value="Arg_repress"/>
</dbReference>
<dbReference type="InterPro" id="IPR020899">
    <property type="entry name" value="Arg_repress_C"/>
</dbReference>
<dbReference type="InterPro" id="IPR036251">
    <property type="entry name" value="Arg_repress_C_sf"/>
</dbReference>
<dbReference type="InterPro" id="IPR020900">
    <property type="entry name" value="Arg_repress_DNA-bd"/>
</dbReference>
<dbReference type="InterPro" id="IPR036388">
    <property type="entry name" value="WH-like_DNA-bd_sf"/>
</dbReference>
<dbReference type="InterPro" id="IPR036390">
    <property type="entry name" value="WH_DNA-bd_sf"/>
</dbReference>
<dbReference type="NCBIfam" id="TIGR01529">
    <property type="entry name" value="argR_whole"/>
    <property type="match status" value="1"/>
</dbReference>
<dbReference type="NCBIfam" id="NF003281">
    <property type="entry name" value="PRK04280.1"/>
    <property type="match status" value="1"/>
</dbReference>
<dbReference type="PANTHER" id="PTHR34471">
    <property type="entry name" value="ARGININE REPRESSOR"/>
    <property type="match status" value="1"/>
</dbReference>
<dbReference type="PANTHER" id="PTHR34471:SF1">
    <property type="entry name" value="ARGININE REPRESSOR"/>
    <property type="match status" value="1"/>
</dbReference>
<dbReference type="Pfam" id="PF01316">
    <property type="entry name" value="Arg_repressor"/>
    <property type="match status" value="1"/>
</dbReference>
<dbReference type="Pfam" id="PF02863">
    <property type="entry name" value="Arg_repressor_C"/>
    <property type="match status" value="1"/>
</dbReference>
<dbReference type="PRINTS" id="PR01467">
    <property type="entry name" value="ARGREPRESSOR"/>
</dbReference>
<dbReference type="SUPFAM" id="SSF55252">
    <property type="entry name" value="C-terminal domain of arginine repressor"/>
    <property type="match status" value="1"/>
</dbReference>
<dbReference type="SUPFAM" id="SSF46785">
    <property type="entry name" value="Winged helix' DNA-binding domain"/>
    <property type="match status" value="1"/>
</dbReference>
<name>ARGR_BACLD</name>
<keyword id="KW-0010">Activator</keyword>
<keyword id="KW-0028">Amino-acid biosynthesis</keyword>
<keyword id="KW-0055">Arginine biosynthesis</keyword>
<keyword id="KW-0056">Arginine metabolism</keyword>
<keyword id="KW-0963">Cytoplasm</keyword>
<keyword id="KW-0238">DNA-binding</keyword>
<keyword id="KW-1185">Reference proteome</keyword>
<keyword id="KW-0678">Repressor</keyword>
<keyword id="KW-0804">Transcription</keyword>
<keyword id="KW-0805">Transcription regulation</keyword>